<proteinExistence type="uncertain"/>
<dbReference type="EMBL" id="U95973">
    <property type="protein sequence ID" value="AAB65485.1"/>
    <property type="status" value="ALT_SEQ"/>
    <property type="molecule type" value="Genomic_DNA"/>
</dbReference>
<dbReference type="EMBL" id="CP002684">
    <property type="protein sequence ID" value="AEE28663.1"/>
    <property type="molecule type" value="Genomic_DNA"/>
</dbReference>
<dbReference type="EMBL" id="CP002684">
    <property type="protein sequence ID" value="AEE28664.1"/>
    <property type="molecule type" value="Genomic_DNA"/>
</dbReference>
<dbReference type="EMBL" id="CP002684">
    <property type="protein sequence ID" value="ANM59880.1"/>
    <property type="molecule type" value="Genomic_DNA"/>
</dbReference>
<dbReference type="EMBL" id="AY074545">
    <property type="status" value="NOT_ANNOTATED_CDS"/>
    <property type="molecule type" value="mRNA"/>
</dbReference>
<dbReference type="PIR" id="A86243">
    <property type="entry name" value="A86243"/>
</dbReference>
<dbReference type="RefSeq" id="NP_001117266.1">
    <property type="nucleotide sequence ID" value="NM_001123794.1"/>
</dbReference>
<dbReference type="RefSeq" id="NP_001322203.1">
    <property type="nucleotide sequence ID" value="NM_001331943.1"/>
</dbReference>
<dbReference type="RefSeq" id="NP_172561.2">
    <property type="nucleotide sequence ID" value="NM_100967.3"/>
</dbReference>
<dbReference type="SMR" id="O04093"/>
<dbReference type="FunCoup" id="O04093">
    <property type="interactions" value="39"/>
</dbReference>
<dbReference type="STRING" id="3702.O04093"/>
<dbReference type="iPTMnet" id="O04093"/>
<dbReference type="PaxDb" id="3702-AT1G10920.1"/>
<dbReference type="ProteomicsDB" id="238481"/>
<dbReference type="EnsemblPlants" id="AT1G10920.1">
    <property type="protein sequence ID" value="AT1G10920.1"/>
    <property type="gene ID" value="AT1G10920"/>
</dbReference>
<dbReference type="EnsemblPlants" id="AT1G10920.2">
    <property type="protein sequence ID" value="AT1G10920.2"/>
    <property type="gene ID" value="AT1G10920"/>
</dbReference>
<dbReference type="EnsemblPlants" id="AT1G10920.4">
    <property type="protein sequence ID" value="AT1G10920.4"/>
    <property type="gene ID" value="AT1G10920"/>
</dbReference>
<dbReference type="GeneID" id="837635"/>
<dbReference type="Gramene" id="AT1G10920.1">
    <property type="protein sequence ID" value="AT1G10920.1"/>
    <property type="gene ID" value="AT1G10920"/>
</dbReference>
<dbReference type="Gramene" id="AT1G10920.2">
    <property type="protein sequence ID" value="AT1G10920.2"/>
    <property type="gene ID" value="AT1G10920"/>
</dbReference>
<dbReference type="Gramene" id="AT1G10920.4">
    <property type="protein sequence ID" value="AT1G10920.4"/>
    <property type="gene ID" value="AT1G10920"/>
</dbReference>
<dbReference type="KEGG" id="ath:AT1G10920"/>
<dbReference type="Araport" id="AT1G10920"/>
<dbReference type="TAIR" id="AT1G10920">
    <property type="gene designation" value="LOV1"/>
</dbReference>
<dbReference type="eggNOG" id="KOG4658">
    <property type="taxonomic scope" value="Eukaryota"/>
</dbReference>
<dbReference type="HOGENOM" id="CLU_000837_35_5_1"/>
<dbReference type="InParanoid" id="O04093"/>
<dbReference type="OMA" id="QVFHHDM"/>
<dbReference type="PhylomeDB" id="O04093"/>
<dbReference type="Proteomes" id="UP000006548">
    <property type="component" value="Chromosome 1"/>
</dbReference>
<dbReference type="ExpressionAtlas" id="O04093">
    <property type="expression patterns" value="baseline and differential"/>
</dbReference>
<dbReference type="GO" id="GO:0005886">
    <property type="term" value="C:plasma membrane"/>
    <property type="evidence" value="ECO:0000314"/>
    <property type="project" value="TAIR"/>
</dbReference>
<dbReference type="GO" id="GO:0043531">
    <property type="term" value="F:ADP binding"/>
    <property type="evidence" value="ECO:0007669"/>
    <property type="project" value="InterPro"/>
</dbReference>
<dbReference type="GO" id="GO:0050832">
    <property type="term" value="P:defense response to fungus"/>
    <property type="evidence" value="ECO:0000315"/>
    <property type="project" value="TAIR"/>
</dbReference>
<dbReference type="GO" id="GO:0002238">
    <property type="term" value="P:response to molecule of fungal origin"/>
    <property type="evidence" value="ECO:0000270"/>
    <property type="project" value="TAIR"/>
</dbReference>
<dbReference type="FunFam" id="3.80.10.10:FF:001978">
    <property type="entry name" value="Inactive disease susceptibility protein LOV1"/>
    <property type="match status" value="1"/>
</dbReference>
<dbReference type="FunFam" id="3.40.50.300:FF:001091">
    <property type="entry name" value="Probable disease resistance protein At1g61300"/>
    <property type="match status" value="1"/>
</dbReference>
<dbReference type="FunFam" id="1.10.10.10:FF:000322">
    <property type="entry name" value="Probable disease resistance protein At1g63360"/>
    <property type="match status" value="1"/>
</dbReference>
<dbReference type="FunFam" id="1.10.8.430:FF:000003">
    <property type="entry name" value="Probable disease resistance protein At5g66910"/>
    <property type="match status" value="1"/>
</dbReference>
<dbReference type="Gene3D" id="1.10.8.430">
    <property type="entry name" value="Helical domain of apoptotic protease-activating factors"/>
    <property type="match status" value="1"/>
</dbReference>
<dbReference type="Gene3D" id="3.40.50.300">
    <property type="entry name" value="P-loop containing nucleotide triphosphate hydrolases"/>
    <property type="match status" value="1"/>
</dbReference>
<dbReference type="Gene3D" id="3.80.10.10">
    <property type="entry name" value="Ribonuclease Inhibitor"/>
    <property type="match status" value="2"/>
</dbReference>
<dbReference type="Gene3D" id="1.10.10.10">
    <property type="entry name" value="Winged helix-like DNA-binding domain superfamily/Winged helix DNA-binding domain"/>
    <property type="match status" value="1"/>
</dbReference>
<dbReference type="InterPro" id="IPR042197">
    <property type="entry name" value="Apaf_helical"/>
</dbReference>
<dbReference type="InterPro" id="IPR044974">
    <property type="entry name" value="Disease_R_plants"/>
</dbReference>
<dbReference type="InterPro" id="IPR032675">
    <property type="entry name" value="LRR_dom_sf"/>
</dbReference>
<dbReference type="InterPro" id="IPR055414">
    <property type="entry name" value="LRR_R13L4/SHOC2-like"/>
</dbReference>
<dbReference type="InterPro" id="IPR002182">
    <property type="entry name" value="NB-ARC"/>
</dbReference>
<dbReference type="InterPro" id="IPR027417">
    <property type="entry name" value="P-loop_NTPase"/>
</dbReference>
<dbReference type="InterPro" id="IPR036388">
    <property type="entry name" value="WH-like_DNA-bd_sf"/>
</dbReference>
<dbReference type="PANTHER" id="PTHR23155">
    <property type="entry name" value="DISEASE RESISTANCE PROTEIN RP"/>
    <property type="match status" value="1"/>
</dbReference>
<dbReference type="PANTHER" id="PTHR23155:SF1185">
    <property type="entry name" value="DISEASE RESISTANCE RPP8-LIKE PROTEIN 3-RELATED"/>
    <property type="match status" value="1"/>
</dbReference>
<dbReference type="Pfam" id="PF23598">
    <property type="entry name" value="LRR_14"/>
    <property type="match status" value="1"/>
</dbReference>
<dbReference type="Pfam" id="PF00931">
    <property type="entry name" value="NB-ARC"/>
    <property type="match status" value="1"/>
</dbReference>
<dbReference type="Pfam" id="PF23559">
    <property type="entry name" value="WH_DRP"/>
    <property type="match status" value="1"/>
</dbReference>
<dbReference type="PRINTS" id="PR00364">
    <property type="entry name" value="DISEASERSIST"/>
</dbReference>
<dbReference type="SUPFAM" id="SSF52058">
    <property type="entry name" value="L domain-like"/>
    <property type="match status" value="1"/>
</dbReference>
<dbReference type="SUPFAM" id="SSF52540">
    <property type="entry name" value="P-loop containing nucleoside triphosphate hydrolases"/>
    <property type="match status" value="1"/>
</dbReference>
<reference key="1">
    <citation type="journal article" date="2000" name="Nature">
        <title>Sequence and analysis of chromosome 1 of the plant Arabidopsis thaliana.</title>
        <authorList>
            <person name="Theologis A."/>
            <person name="Ecker J.R."/>
            <person name="Palm C.J."/>
            <person name="Federspiel N.A."/>
            <person name="Kaul S."/>
            <person name="White O."/>
            <person name="Alonso J."/>
            <person name="Altafi H."/>
            <person name="Araujo R."/>
            <person name="Bowman C.L."/>
            <person name="Brooks S.Y."/>
            <person name="Buehler E."/>
            <person name="Chan A."/>
            <person name="Chao Q."/>
            <person name="Chen H."/>
            <person name="Cheuk R.F."/>
            <person name="Chin C.W."/>
            <person name="Chung M.K."/>
            <person name="Conn L."/>
            <person name="Conway A.B."/>
            <person name="Conway A.R."/>
            <person name="Creasy T.H."/>
            <person name="Dewar K."/>
            <person name="Dunn P."/>
            <person name="Etgu P."/>
            <person name="Feldblyum T.V."/>
            <person name="Feng J.-D."/>
            <person name="Fong B."/>
            <person name="Fujii C.Y."/>
            <person name="Gill J.E."/>
            <person name="Goldsmith A.D."/>
            <person name="Haas B."/>
            <person name="Hansen N.F."/>
            <person name="Hughes B."/>
            <person name="Huizar L."/>
            <person name="Hunter J.L."/>
            <person name="Jenkins J."/>
            <person name="Johnson-Hopson C."/>
            <person name="Khan S."/>
            <person name="Khaykin E."/>
            <person name="Kim C.J."/>
            <person name="Koo H.L."/>
            <person name="Kremenetskaia I."/>
            <person name="Kurtz D.B."/>
            <person name="Kwan A."/>
            <person name="Lam B."/>
            <person name="Langin-Hooper S."/>
            <person name="Lee A."/>
            <person name="Lee J.M."/>
            <person name="Lenz C.A."/>
            <person name="Li J.H."/>
            <person name="Li Y.-P."/>
            <person name="Lin X."/>
            <person name="Liu S.X."/>
            <person name="Liu Z.A."/>
            <person name="Luros J.S."/>
            <person name="Maiti R."/>
            <person name="Marziali A."/>
            <person name="Militscher J."/>
            <person name="Miranda M."/>
            <person name="Nguyen M."/>
            <person name="Nierman W.C."/>
            <person name="Osborne B.I."/>
            <person name="Pai G."/>
            <person name="Peterson J."/>
            <person name="Pham P.K."/>
            <person name="Rizzo M."/>
            <person name="Rooney T."/>
            <person name="Rowley D."/>
            <person name="Sakano H."/>
            <person name="Salzberg S.L."/>
            <person name="Schwartz J.R."/>
            <person name="Shinn P."/>
            <person name="Southwick A.M."/>
            <person name="Sun H."/>
            <person name="Tallon L.J."/>
            <person name="Tambunga G."/>
            <person name="Toriumi M.J."/>
            <person name="Town C.D."/>
            <person name="Utterback T."/>
            <person name="Van Aken S."/>
            <person name="Vaysberg M."/>
            <person name="Vysotskaia V.S."/>
            <person name="Walker M."/>
            <person name="Wu D."/>
            <person name="Yu G."/>
            <person name="Fraser C.M."/>
            <person name="Venter J.C."/>
            <person name="Davis R.W."/>
        </authorList>
    </citation>
    <scope>NUCLEOTIDE SEQUENCE [LARGE SCALE GENOMIC DNA]</scope>
    <source>
        <strain>cv. Columbia</strain>
    </source>
</reference>
<reference key="2">
    <citation type="journal article" date="2017" name="Plant J.">
        <title>Araport11: a complete reannotation of the Arabidopsis thaliana reference genome.</title>
        <authorList>
            <person name="Cheng C.Y."/>
            <person name="Krishnakumar V."/>
            <person name="Chan A.P."/>
            <person name="Thibaud-Nissen F."/>
            <person name="Schobel S."/>
            <person name="Town C.D."/>
        </authorList>
    </citation>
    <scope>GENOME REANNOTATION</scope>
    <source>
        <strain>cv. Columbia</strain>
    </source>
</reference>
<reference key="3">
    <citation type="journal article" date="2003" name="Science">
        <title>Empirical analysis of transcriptional activity in the Arabidopsis genome.</title>
        <authorList>
            <person name="Yamada K."/>
            <person name="Lim J."/>
            <person name="Dale J.M."/>
            <person name="Chen H."/>
            <person name="Shinn P."/>
            <person name="Palm C.J."/>
            <person name="Southwick A.M."/>
            <person name="Wu H.C."/>
            <person name="Kim C.J."/>
            <person name="Nguyen M."/>
            <person name="Pham P.K."/>
            <person name="Cheuk R.F."/>
            <person name="Karlin-Newmann G."/>
            <person name="Liu S.X."/>
            <person name="Lam B."/>
            <person name="Sakano H."/>
            <person name="Wu T."/>
            <person name="Yu G."/>
            <person name="Miranda M."/>
            <person name="Quach H.L."/>
            <person name="Tripp M."/>
            <person name="Chang C.H."/>
            <person name="Lee J.M."/>
            <person name="Toriumi M.J."/>
            <person name="Chan M.M."/>
            <person name="Tang C.C."/>
            <person name="Onodera C.S."/>
            <person name="Deng J.M."/>
            <person name="Akiyama K."/>
            <person name="Ansari Y."/>
            <person name="Arakawa T."/>
            <person name="Banh J."/>
            <person name="Banno F."/>
            <person name="Bowser L."/>
            <person name="Brooks S.Y."/>
            <person name="Carninci P."/>
            <person name="Chao Q."/>
            <person name="Choy N."/>
            <person name="Enju A."/>
            <person name="Goldsmith A.D."/>
            <person name="Gurjal M."/>
            <person name="Hansen N.F."/>
            <person name="Hayashizaki Y."/>
            <person name="Johnson-Hopson C."/>
            <person name="Hsuan V.W."/>
            <person name="Iida K."/>
            <person name="Karnes M."/>
            <person name="Khan S."/>
            <person name="Koesema E."/>
            <person name="Ishida J."/>
            <person name="Jiang P.X."/>
            <person name="Jones T."/>
            <person name="Kawai J."/>
            <person name="Kamiya A."/>
            <person name="Meyers C."/>
            <person name="Nakajima M."/>
            <person name="Narusaka M."/>
            <person name="Seki M."/>
            <person name="Sakurai T."/>
            <person name="Satou M."/>
            <person name="Tamse R."/>
            <person name="Vaysberg M."/>
            <person name="Wallender E.K."/>
            <person name="Wong C."/>
            <person name="Yamamura Y."/>
            <person name="Yuan S."/>
            <person name="Shinozaki K."/>
            <person name="Davis R.W."/>
            <person name="Theologis A."/>
            <person name="Ecker J.R."/>
        </authorList>
    </citation>
    <scope>NUCLEOTIDE SEQUENCE [LARGE SCALE MRNA] OF 1-322</scope>
    <source>
        <strain>cv. Columbia</strain>
    </source>
</reference>
<reference key="4">
    <citation type="journal article" date="2007" name="Proc. Natl. Acad. Sci. U.S.A.">
        <title>Plant disease susceptibility conferred by a 'resistance' gene.</title>
        <authorList>
            <person name="Lorang J.M."/>
            <person name="Sweat T.A."/>
            <person name="Wolpert T.J."/>
        </authorList>
    </citation>
    <scope>IDENTIFICATION OF FRAMESHIFT AND STOP CODON</scope>
    <source>
        <strain>cv. Cl-0</strain>
    </source>
</reference>
<reference key="5">
    <citation type="journal article" date="2008" name="Mol. Plant Microbe Interact.">
        <title>Characterization of natural and induced variation in the LOV1 gene, a CC-NB-LRR gene conferring victorin sensitivity and disease susceptibility in Arabidopsis.</title>
        <authorList>
            <person name="Sweat T.A."/>
            <person name="Lorang J.M."/>
            <person name="Bakker E.G."/>
            <person name="Wolpert T.J."/>
        </authorList>
    </citation>
    <scope>IDENTIFICATION OF FRAMESHIFT AND STOP CODON</scope>
    <source>
        <strain>cv. Col-4</strain>
    </source>
</reference>
<reference key="6">
    <citation type="journal article" date="2010" name="Plant Physiol.">
        <title>Epigenetic regulation of gene programs by EMF1 and EMF2 in Arabidopsis.</title>
        <authorList>
            <person name="Kim S.Y."/>
            <person name="Zhu T."/>
            <person name="Sung Z.R."/>
        </authorList>
    </citation>
    <scope>INDUCTION BY EMF1 AND EMF2</scope>
</reference>
<sequence length="727" mass="83685">MKSLGIQEIIDGASSMSLQERQREQKEIRQTFANSSESDLVGVEQSVEALAGHLVENDNIQVVSISGMGGIGKTTLARQVFHHDMVQRHFDGFAWVFVSQQFTQKHVWQRIWQELQPQNGDISHMDEHILQGKLFKLLETGRYLVVLDDVWKEEDWDRIKAVFPRKRGWKMLLTSRNEGVGIHADPKSFGFKTRILTPEESWKLCEKIVFHRRDETGTLSEVRVDEDMEAMGKEMVTCCGGLPLAVKVLGGLLATKHTVPEWKRVYDNIGPHLAGRSSLDDNLNSIYRVLSLSYENLPMCLKHCFLYLAHFPEYYEIHVKRLFNYLAAEGIITSSDDGTTIQDKGEDYLEELARRNMITIDKNYMFLRKKHCQMHDMMREVCLSKAKEENFLEIFKVSTATSAINARSLSKSRRLSVHGGNALPSLGQTINKKVRSLLYFAFEDEFCILESTTPCFRSLPLLRVLDLSRVKFEGGKLPSSIGDLIHLRFLSLHRAWISHLPSSLRNLKLLLYLNLGFNGMVHVPNVLKEMQELRYLQLPMSMHDKTKLELSDLVNLESLMNFSTKYASVMDLLHMTKLRELSLFITDGSSDTLSSSLGQLRSLEVLHLYDRQEPRVAYHGGEIVLNCIHLKELELAIHMPRFPDQYLFHPHLSHIYLWCCSMEEDPIPILERLLHLKSVILTFGAFVGRRMVCSKGGFPQLCFLKLEELEELEEWIVEEGRCHFFVL</sequence>
<gene>
    <name type="primary">LOV1</name>
    <name type="synonym">RPP8L1</name>
    <name type="ordered locus">At1g10920</name>
    <name type="ORF">T19D16.16</name>
</gene>
<protein>
    <recommendedName>
        <fullName>Putative inactive disease susceptibility protein LOV1</fullName>
    </recommendedName>
    <alternativeName>
        <fullName>Disease resistance protein RPP8-like protein 1</fullName>
    </alternativeName>
    <alternativeName>
        <fullName>Protein LONG VEGETATIVE PHASE1</fullName>
    </alternativeName>
</protein>
<keyword id="KW-0433">Leucine-rich repeat</keyword>
<keyword id="KW-0611">Plant defense</keyword>
<keyword id="KW-1185">Reference proteome</keyword>
<keyword id="KW-0677">Repeat</keyword>
<comment type="induction">
    <text evidence="1">Repressed by silencing mediated by polycomb group (PcG) protein complex containing EMF1 and EMF2.</text>
</comment>
<comment type="similarity">
    <text evidence="2">Belongs to the disease resistance NB-LRR family. RPP8/HRT subfamily.</text>
</comment>
<comment type="caution">
    <text evidence="2">Could be the product of a pseudogene. In strain cv. Columbia, a stop codon at position 117 and a naturally occurring frameshift at position 846 result in a truncated LOV1 protein. A complete sequence for LOV1 can be found in strain cv. Cl-0 (AC A7XGN8).</text>
</comment>
<comment type="sequence caution" evidence="2">
    <conflict type="erroneous gene model prediction">
        <sequence resource="EMBL-CDS" id="AAB65485"/>
    </conflict>
</comment>
<comment type="online information" name="NIB-LRRS">
    <link uri="http://niblrrs.ucdavis.edu"/>
    <text>Functional and comparative genomics of disease resistance gene homologs</text>
</comment>
<evidence type="ECO:0000269" key="1">
    <source>
    </source>
</evidence>
<evidence type="ECO:0000305" key="2"/>
<organism>
    <name type="scientific">Arabidopsis thaliana</name>
    <name type="common">Mouse-ear cress</name>
    <dbReference type="NCBI Taxonomy" id="3702"/>
    <lineage>
        <taxon>Eukaryota</taxon>
        <taxon>Viridiplantae</taxon>
        <taxon>Streptophyta</taxon>
        <taxon>Embryophyta</taxon>
        <taxon>Tracheophyta</taxon>
        <taxon>Spermatophyta</taxon>
        <taxon>Magnoliopsida</taxon>
        <taxon>eudicotyledons</taxon>
        <taxon>Gunneridae</taxon>
        <taxon>Pentapetalae</taxon>
        <taxon>rosids</taxon>
        <taxon>malvids</taxon>
        <taxon>Brassicales</taxon>
        <taxon>Brassicaceae</taxon>
        <taxon>Camelineae</taxon>
        <taxon>Arabidopsis</taxon>
    </lineage>
</organism>
<name>LOV1A_ARATH</name>
<accession>O04093</accession>
<feature type="chain" id="PRO_0000212721" description="Putative inactive disease susceptibility protein LOV1">
    <location>
        <begin position="1"/>
        <end position="727"/>
    </location>
</feature>
<feature type="domain" description="NB-ARC">
    <location>
        <begin position="44"/>
        <end position="336"/>
    </location>
</feature>
<feature type="repeat" description="LRR 1">
    <location>
        <begin position="459"/>
        <end position="484"/>
    </location>
</feature>
<feature type="repeat" description="LRR 2">
    <location>
        <begin position="485"/>
        <end position="507"/>
    </location>
</feature>
<feature type="repeat" description="LRR 3">
    <location>
        <begin position="509"/>
        <end position="530"/>
    </location>
</feature>
<feature type="repeat" description="LRR 4">
    <location>
        <begin position="575"/>
        <end position="600"/>
    </location>
</feature>
<feature type="repeat" description="LRR 5">
    <location>
        <begin position="601"/>
        <end position="626"/>
    </location>
</feature>